<name>HEM1_STAAR</name>
<gene>
    <name evidence="1" type="primary">hemA</name>
    <name type="ordered locus">SAR1752</name>
</gene>
<dbReference type="EC" id="1.2.1.70" evidence="1"/>
<dbReference type="EMBL" id="BX571856">
    <property type="protein sequence ID" value="CAG40743.1"/>
    <property type="molecule type" value="Genomic_DNA"/>
</dbReference>
<dbReference type="RefSeq" id="WP_000545454.1">
    <property type="nucleotide sequence ID" value="NC_002952.2"/>
</dbReference>
<dbReference type="SMR" id="Q6GG33"/>
<dbReference type="KEGG" id="sar:SAR1752"/>
<dbReference type="HOGENOM" id="CLU_035113_2_2_9"/>
<dbReference type="UniPathway" id="UPA00251">
    <property type="reaction ID" value="UER00316"/>
</dbReference>
<dbReference type="Proteomes" id="UP000000596">
    <property type="component" value="Chromosome"/>
</dbReference>
<dbReference type="GO" id="GO:0008883">
    <property type="term" value="F:glutamyl-tRNA reductase activity"/>
    <property type="evidence" value="ECO:0007669"/>
    <property type="project" value="UniProtKB-UniRule"/>
</dbReference>
<dbReference type="GO" id="GO:0050661">
    <property type="term" value="F:NADP binding"/>
    <property type="evidence" value="ECO:0007669"/>
    <property type="project" value="InterPro"/>
</dbReference>
<dbReference type="GO" id="GO:0006782">
    <property type="term" value="P:protoporphyrinogen IX biosynthetic process"/>
    <property type="evidence" value="ECO:0007669"/>
    <property type="project" value="UniProtKB-UniRule"/>
</dbReference>
<dbReference type="CDD" id="cd05213">
    <property type="entry name" value="NAD_bind_Glutamyl_tRNA_reduct"/>
    <property type="match status" value="1"/>
</dbReference>
<dbReference type="FunFam" id="3.30.460.30:FF:000001">
    <property type="entry name" value="Glutamyl-tRNA reductase"/>
    <property type="match status" value="1"/>
</dbReference>
<dbReference type="FunFam" id="3.40.50.720:FF:000031">
    <property type="entry name" value="Glutamyl-tRNA reductase"/>
    <property type="match status" value="1"/>
</dbReference>
<dbReference type="Gene3D" id="3.30.460.30">
    <property type="entry name" value="Glutamyl-tRNA reductase, N-terminal domain"/>
    <property type="match status" value="1"/>
</dbReference>
<dbReference type="Gene3D" id="3.40.50.720">
    <property type="entry name" value="NAD(P)-binding Rossmann-like Domain"/>
    <property type="match status" value="1"/>
</dbReference>
<dbReference type="HAMAP" id="MF_00087">
    <property type="entry name" value="Glu_tRNA_reductase"/>
    <property type="match status" value="1"/>
</dbReference>
<dbReference type="InterPro" id="IPR000343">
    <property type="entry name" value="4pyrrol_synth_GluRdtase"/>
</dbReference>
<dbReference type="InterPro" id="IPR015896">
    <property type="entry name" value="4pyrrol_synth_GluRdtase_dimer"/>
</dbReference>
<dbReference type="InterPro" id="IPR015895">
    <property type="entry name" value="4pyrrol_synth_GluRdtase_N"/>
</dbReference>
<dbReference type="InterPro" id="IPR018214">
    <property type="entry name" value="GluRdtase_CS"/>
</dbReference>
<dbReference type="InterPro" id="IPR036453">
    <property type="entry name" value="GluRdtase_dimer_dom_sf"/>
</dbReference>
<dbReference type="InterPro" id="IPR036343">
    <property type="entry name" value="GluRdtase_N_sf"/>
</dbReference>
<dbReference type="InterPro" id="IPR036291">
    <property type="entry name" value="NAD(P)-bd_dom_sf"/>
</dbReference>
<dbReference type="InterPro" id="IPR006151">
    <property type="entry name" value="Shikm_DH/Glu-tRNA_Rdtase"/>
</dbReference>
<dbReference type="NCBIfam" id="TIGR01035">
    <property type="entry name" value="hemA"/>
    <property type="match status" value="1"/>
</dbReference>
<dbReference type="PANTHER" id="PTHR43120">
    <property type="entry name" value="GLUTAMYL-TRNA REDUCTASE 1, CHLOROPLASTIC"/>
    <property type="match status" value="1"/>
</dbReference>
<dbReference type="PANTHER" id="PTHR43120:SF1">
    <property type="entry name" value="GLUTAMYL-TRNA REDUCTASE 1, CHLOROPLASTIC"/>
    <property type="match status" value="1"/>
</dbReference>
<dbReference type="Pfam" id="PF00745">
    <property type="entry name" value="GlutR_dimer"/>
    <property type="match status" value="1"/>
</dbReference>
<dbReference type="Pfam" id="PF05201">
    <property type="entry name" value="GlutR_N"/>
    <property type="match status" value="1"/>
</dbReference>
<dbReference type="Pfam" id="PF01488">
    <property type="entry name" value="Shikimate_DH"/>
    <property type="match status" value="1"/>
</dbReference>
<dbReference type="PIRSF" id="PIRSF000445">
    <property type="entry name" value="4pyrrol_synth_GluRdtase"/>
    <property type="match status" value="1"/>
</dbReference>
<dbReference type="SUPFAM" id="SSF69742">
    <property type="entry name" value="Glutamyl tRNA-reductase catalytic, N-terminal domain"/>
    <property type="match status" value="1"/>
</dbReference>
<dbReference type="SUPFAM" id="SSF69075">
    <property type="entry name" value="Glutamyl tRNA-reductase dimerization domain"/>
    <property type="match status" value="1"/>
</dbReference>
<dbReference type="SUPFAM" id="SSF51735">
    <property type="entry name" value="NAD(P)-binding Rossmann-fold domains"/>
    <property type="match status" value="1"/>
</dbReference>
<dbReference type="PROSITE" id="PS00747">
    <property type="entry name" value="GLUTR"/>
    <property type="match status" value="1"/>
</dbReference>
<protein>
    <recommendedName>
        <fullName evidence="1">Glutamyl-tRNA reductase</fullName>
        <shortName evidence="1">GluTR</shortName>
        <ecNumber evidence="1">1.2.1.70</ecNumber>
    </recommendedName>
</protein>
<organism>
    <name type="scientific">Staphylococcus aureus (strain MRSA252)</name>
    <dbReference type="NCBI Taxonomy" id="282458"/>
    <lineage>
        <taxon>Bacteria</taxon>
        <taxon>Bacillati</taxon>
        <taxon>Bacillota</taxon>
        <taxon>Bacilli</taxon>
        <taxon>Bacillales</taxon>
        <taxon>Staphylococcaceae</taxon>
        <taxon>Staphylococcus</taxon>
    </lineage>
</organism>
<feature type="chain" id="PRO_0000114070" description="Glutamyl-tRNA reductase">
    <location>
        <begin position="1"/>
        <end position="448"/>
    </location>
</feature>
<feature type="active site" description="Nucleophile" evidence="1">
    <location>
        <position position="50"/>
    </location>
</feature>
<feature type="binding site" evidence="1">
    <location>
        <begin position="49"/>
        <end position="52"/>
    </location>
    <ligand>
        <name>substrate</name>
    </ligand>
</feature>
<feature type="binding site" evidence="1">
    <location>
        <position position="109"/>
    </location>
    <ligand>
        <name>substrate</name>
    </ligand>
</feature>
<feature type="binding site" evidence="1">
    <location>
        <begin position="114"/>
        <end position="116"/>
    </location>
    <ligand>
        <name>substrate</name>
    </ligand>
</feature>
<feature type="binding site" evidence="1">
    <location>
        <position position="120"/>
    </location>
    <ligand>
        <name>substrate</name>
    </ligand>
</feature>
<feature type="binding site" evidence="1">
    <location>
        <begin position="189"/>
        <end position="194"/>
    </location>
    <ligand>
        <name>NADP(+)</name>
        <dbReference type="ChEBI" id="CHEBI:58349"/>
    </ligand>
</feature>
<feature type="site" description="Important for activity" evidence="1">
    <location>
        <position position="99"/>
    </location>
</feature>
<comment type="function">
    <text evidence="1">Catalyzes the NADPH-dependent reduction of glutamyl-tRNA(Glu) to glutamate 1-semialdehyde (GSA).</text>
</comment>
<comment type="catalytic activity">
    <reaction evidence="1">
        <text>(S)-4-amino-5-oxopentanoate + tRNA(Glu) + NADP(+) = L-glutamyl-tRNA(Glu) + NADPH + H(+)</text>
        <dbReference type="Rhea" id="RHEA:12344"/>
        <dbReference type="Rhea" id="RHEA-COMP:9663"/>
        <dbReference type="Rhea" id="RHEA-COMP:9680"/>
        <dbReference type="ChEBI" id="CHEBI:15378"/>
        <dbReference type="ChEBI" id="CHEBI:57501"/>
        <dbReference type="ChEBI" id="CHEBI:57783"/>
        <dbReference type="ChEBI" id="CHEBI:58349"/>
        <dbReference type="ChEBI" id="CHEBI:78442"/>
        <dbReference type="ChEBI" id="CHEBI:78520"/>
        <dbReference type="EC" id="1.2.1.70"/>
    </reaction>
</comment>
<comment type="pathway">
    <text evidence="1">Porphyrin-containing compound metabolism; protoporphyrin-IX biosynthesis; 5-aminolevulinate from L-glutamyl-tRNA(Glu): step 1/2.</text>
</comment>
<comment type="subunit">
    <text evidence="1">Homodimer.</text>
</comment>
<comment type="domain">
    <text evidence="1">Possesses an unusual extended V-shaped dimeric structure with each monomer consisting of three distinct domains arranged along a curved 'spinal' alpha-helix. The N-terminal catalytic domain specifically recognizes the glutamate moiety of the substrate. The second domain is the NADPH-binding domain, and the third C-terminal domain is responsible for dimerization.</text>
</comment>
<comment type="miscellaneous">
    <text evidence="1">During catalysis, the active site Cys acts as a nucleophile attacking the alpha-carbonyl group of tRNA-bound glutamate with the formation of a thioester intermediate between enzyme and glutamate, and the concomitant release of tRNA(Glu). The thioester intermediate is finally reduced by direct hydride transfer from NADPH, to form the product GSA.</text>
</comment>
<comment type="similarity">
    <text evidence="1">Belongs to the glutamyl-tRNA reductase family.</text>
</comment>
<reference key="1">
    <citation type="journal article" date="2004" name="Proc. Natl. Acad. Sci. U.S.A.">
        <title>Complete genomes of two clinical Staphylococcus aureus strains: evidence for the rapid evolution of virulence and drug resistance.</title>
        <authorList>
            <person name="Holden M.T.G."/>
            <person name="Feil E.J."/>
            <person name="Lindsay J.A."/>
            <person name="Peacock S.J."/>
            <person name="Day N.P.J."/>
            <person name="Enright M.C."/>
            <person name="Foster T.J."/>
            <person name="Moore C.E."/>
            <person name="Hurst L."/>
            <person name="Atkin R."/>
            <person name="Barron A."/>
            <person name="Bason N."/>
            <person name="Bentley S.D."/>
            <person name="Chillingworth C."/>
            <person name="Chillingworth T."/>
            <person name="Churcher C."/>
            <person name="Clark L."/>
            <person name="Corton C."/>
            <person name="Cronin A."/>
            <person name="Doggett J."/>
            <person name="Dowd L."/>
            <person name="Feltwell T."/>
            <person name="Hance Z."/>
            <person name="Harris B."/>
            <person name="Hauser H."/>
            <person name="Holroyd S."/>
            <person name="Jagels K."/>
            <person name="James K.D."/>
            <person name="Lennard N."/>
            <person name="Line A."/>
            <person name="Mayes R."/>
            <person name="Moule S."/>
            <person name="Mungall K."/>
            <person name="Ormond D."/>
            <person name="Quail M.A."/>
            <person name="Rabbinowitsch E."/>
            <person name="Rutherford K.M."/>
            <person name="Sanders M."/>
            <person name="Sharp S."/>
            <person name="Simmonds M."/>
            <person name="Stevens K."/>
            <person name="Whitehead S."/>
            <person name="Barrell B.G."/>
            <person name="Spratt B.G."/>
            <person name="Parkhill J."/>
        </authorList>
    </citation>
    <scope>NUCLEOTIDE SEQUENCE [LARGE SCALE GENOMIC DNA]</scope>
    <source>
        <strain>MRSA252</strain>
    </source>
</reference>
<accession>Q6GG33</accession>
<keyword id="KW-0521">NADP</keyword>
<keyword id="KW-0560">Oxidoreductase</keyword>
<keyword id="KW-0627">Porphyrin biosynthesis</keyword>
<sequence>MHFIAISINHRTADVALREQVAFRDDALRIAHEDLYETKSILENVILSTCNRTEVYAVVDQIHTGRYYIQRFLARAFGFEVDDIKAMSEVKVGDEAVEHLLRVTSGLDSIVLGETQILGQIRDAFFLAQSTGTTGTIFNHLFKQAITFAKRAHNETDIADNAVSVSYAAVELAKKVFGKLKSKQAIIIGAGEMSELSLLNLLGSGITDITVVNRTIENAMKLAAKHQVKYDELSSLPNLLESADIVISSTSAQSYIITNEMIERIAENRKQDSLVLIDIAVPRDIEPGISAITNIFNYDVDDLKGLVDANLRERQLAAATISEQIPAEIHAHNEWVSMLGVVPVIRALREKAMAIQAETMDSIDRKLPGLSERERKIISKHTKSIINQMLKDPIKQAKELSSDKKSNEKFELFQNIFDIEAKCPHEQAKQQKESKVKEISARRIFSFE</sequence>
<evidence type="ECO:0000255" key="1">
    <source>
        <dbReference type="HAMAP-Rule" id="MF_00087"/>
    </source>
</evidence>
<proteinExistence type="inferred from homology"/>